<proteinExistence type="evidence at transcript level"/>
<gene>
    <name evidence="8" type="primary">UCP1</name>
    <name evidence="4" type="synonym">SLC25A7</name>
</gene>
<sequence>MVASAEADVPPPTMLVKIASAGLSACLADIITFPLDTAKVRLQVQGERPNAPGVKYKGVLGTIATVAKTEGPLKLYGGLPAGIQRQISFASLRIGLYDTVQEYFNAHRKTPATLGNKISAGLMTGCVTVFIGQPTEVAKVRMQAQSSLHWLKPRYSGTYNAYYVIVKTEGFLGLWKGTSLNLTRNVIINCTELVVYDVLKEALVKNNVLADDIPCHLLAALTAGFCTTALASPVDVVKTRFINSPPGYYPHVHNCALNMLQKEGLRAFFKGFVPSFLRLGSWTVIMHVTFEQLKKELMKSRQTVDCAT</sequence>
<dbReference type="EMBL" id="AB244816">
    <property type="protein sequence ID" value="BAE96411.1"/>
    <property type="molecule type" value="mRNA"/>
</dbReference>
<dbReference type="SMR" id="Q18P97"/>
<dbReference type="GO" id="GO:0005743">
    <property type="term" value="C:mitochondrial inner membrane"/>
    <property type="evidence" value="ECO:0000250"/>
    <property type="project" value="UniProtKB"/>
</dbReference>
<dbReference type="GO" id="GO:1901612">
    <property type="term" value="F:cardiolipin binding"/>
    <property type="evidence" value="ECO:0000250"/>
    <property type="project" value="UniProtKB"/>
</dbReference>
<dbReference type="GO" id="GO:0036041">
    <property type="term" value="F:long-chain fatty acid binding"/>
    <property type="evidence" value="ECO:0000250"/>
    <property type="project" value="UniProtKB"/>
</dbReference>
<dbReference type="GO" id="GO:0017077">
    <property type="term" value="F:oxidative phosphorylation uncoupler activity"/>
    <property type="evidence" value="ECO:0000250"/>
    <property type="project" value="UniProtKB"/>
</dbReference>
<dbReference type="GO" id="GO:0032555">
    <property type="term" value="F:purine ribonucleotide binding"/>
    <property type="evidence" value="ECO:0000250"/>
    <property type="project" value="UniProtKB"/>
</dbReference>
<dbReference type="GO" id="GO:1990845">
    <property type="term" value="P:adaptive thermogenesis"/>
    <property type="evidence" value="ECO:0000250"/>
    <property type="project" value="UniProtKB"/>
</dbReference>
<dbReference type="GO" id="GO:0071398">
    <property type="term" value="P:cellular response to fatty acid"/>
    <property type="evidence" value="ECO:0000250"/>
    <property type="project" value="UniProtKB"/>
</dbReference>
<dbReference type="GO" id="GO:0032870">
    <property type="term" value="P:cellular response to hormone stimulus"/>
    <property type="evidence" value="ECO:0000250"/>
    <property type="project" value="UniProtKB"/>
</dbReference>
<dbReference type="GO" id="GO:0034614">
    <property type="term" value="P:cellular response to reactive oxygen species"/>
    <property type="evidence" value="ECO:0000250"/>
    <property type="project" value="UniProtKB"/>
</dbReference>
<dbReference type="GO" id="GO:1990542">
    <property type="term" value="P:mitochondrial transmembrane transport"/>
    <property type="evidence" value="ECO:0000250"/>
    <property type="project" value="UniProtKB"/>
</dbReference>
<dbReference type="GO" id="GO:1902600">
    <property type="term" value="P:proton transmembrane transport"/>
    <property type="evidence" value="ECO:0000250"/>
    <property type="project" value="UniProtKB"/>
</dbReference>
<dbReference type="GO" id="GO:1903426">
    <property type="term" value="P:regulation of reactive oxygen species biosynthetic process"/>
    <property type="evidence" value="ECO:0000250"/>
    <property type="project" value="UniProtKB"/>
</dbReference>
<dbReference type="GO" id="GO:0031667">
    <property type="term" value="P:response to nutrient levels"/>
    <property type="evidence" value="ECO:0000250"/>
    <property type="project" value="UniProtKB"/>
</dbReference>
<dbReference type="GO" id="GO:0009266">
    <property type="term" value="P:response to temperature stimulus"/>
    <property type="evidence" value="ECO:0000250"/>
    <property type="project" value="UniProtKB"/>
</dbReference>
<dbReference type="FunFam" id="1.50.40.10:FF:000068">
    <property type="entry name" value="Mitochondrial brown fat uncoupling protein 1"/>
    <property type="match status" value="1"/>
</dbReference>
<dbReference type="Gene3D" id="1.50.40.10">
    <property type="entry name" value="Mitochondrial carrier domain"/>
    <property type="match status" value="1"/>
</dbReference>
<dbReference type="InterPro" id="IPR002067">
    <property type="entry name" value="Mit_carrier"/>
</dbReference>
<dbReference type="InterPro" id="IPR050391">
    <property type="entry name" value="Mito_Metabolite_Transporter"/>
</dbReference>
<dbReference type="InterPro" id="IPR018108">
    <property type="entry name" value="Mitochondrial_sb/sol_carrier"/>
</dbReference>
<dbReference type="InterPro" id="IPR023395">
    <property type="entry name" value="Mt_carrier_dom_sf"/>
</dbReference>
<dbReference type="PANTHER" id="PTHR45618">
    <property type="entry name" value="MITOCHONDRIAL DICARBOXYLATE CARRIER-RELATED"/>
    <property type="match status" value="1"/>
</dbReference>
<dbReference type="Pfam" id="PF00153">
    <property type="entry name" value="Mito_carr"/>
    <property type="match status" value="3"/>
</dbReference>
<dbReference type="PRINTS" id="PR00784">
    <property type="entry name" value="MTUNCOUPLING"/>
</dbReference>
<dbReference type="SUPFAM" id="SSF103506">
    <property type="entry name" value="Mitochondrial carrier"/>
    <property type="match status" value="1"/>
</dbReference>
<dbReference type="PROSITE" id="PS50920">
    <property type="entry name" value="SOLCAR"/>
    <property type="match status" value="3"/>
</dbReference>
<protein>
    <recommendedName>
        <fullName evidence="9">Mitochondrial brown fat uncoupling protein 1</fullName>
        <shortName evidence="9">UCP 1</shortName>
    </recommendedName>
    <alternativeName>
        <fullName evidence="4">Solute carrier family 25 member 7</fullName>
    </alternativeName>
    <alternativeName>
        <fullName evidence="1">Thermogenin</fullName>
    </alternativeName>
</protein>
<accession>Q18P97</accession>
<reference key="1">
    <citation type="journal article" date="2006" name="Zool. Sci.">
        <title>Cloning of putative uncoupling protein 1 cDNA in a cold-intolerant mammal, the house musk shrew (Suncus murinus).</title>
        <authorList>
            <person name="Suzuki D."/>
            <person name="Murata Y."/>
            <person name="Oda S."/>
        </authorList>
    </citation>
    <scope>NUCLEOTIDE SEQUENCE [MRNA]</scope>
    <scope>TISSUE SPECIFICITY</scope>
</reference>
<comment type="function">
    <text evidence="3">Mitochondrial protein responsible for thermogenic respiration, a specialized capacity of brown adipose tissue and beige fat that participates in non-shivering adaptive thermogenesis to temperature and diet variations and more generally to the regulation of energy balance. Functions as a long-chain fatty acid/LCFA and proton symporter, simultaneously transporting one LCFA and one proton through the inner mitochondrial membrane. However, LCFAs remaining associated with the transporter via their hydrophobic tails, it results in an apparent transport of protons activated by LCFAs. Thereby, dissipates the mitochondrial proton gradient and converts the energy of substrate oxydation into heat instead of ATP. Regulates the production of reactive oxygen species/ROS by mitochondria.</text>
</comment>
<comment type="catalytic activity">
    <reaction evidence="4">
        <text>H(+)(in) = H(+)(out)</text>
        <dbReference type="Rhea" id="RHEA:34979"/>
        <dbReference type="ChEBI" id="CHEBI:15378"/>
    </reaction>
</comment>
<comment type="activity regulation">
    <text evidence="3">Has no constitutive proton transporter activity and has to be activated by long-chain fatty acids/LCFAs. Inhibited by purine nucleotides. Both purine nucleotides and LCFAs bind the cytosolic side of the transporter and directly compete to activate or inhibit it. Activated by noradrenaline and reactive oxygen species. Despite lacking canonical translational encoding for selenocysteine, a small pool of the protein has been observed to selectively incorporate selenocysteine at 'Cys-255'. Selenocysteine-modified protein is highly sensitive to redox modification and may constitute a pool of protein highly sensitive to activation by elevated levels of reactive oxygen species (ROS).</text>
</comment>
<comment type="subunit">
    <text evidence="4 5">Most probably functions as a monomer. Binds one purine nucleotide per monomer. However, has also been suggested to function as a homodimer or a homotetramer. Tightly associates with cardiolipin in the mitochondrion inner membrane; may stabilize and regulate its activity.</text>
</comment>
<comment type="subcellular location">
    <subcellularLocation>
        <location evidence="3">Mitochondrion inner membrane</location>
        <topology evidence="2">Multi-pass membrane protein</topology>
    </subcellularLocation>
</comment>
<comment type="tissue specificity">
    <text evidence="7">Brown adipose tissue.</text>
</comment>
<comment type="PTM">
    <text evidence="3">May undergo sulfenylation upon cold exposure. May increase the sensitivity of UCP1 thermogenic function to the activation by noradrenaline probably through structural effects.</text>
</comment>
<comment type="PTM">
    <text evidence="2">May undergo ubiquitin-mediated proteasomal degradation.</text>
</comment>
<comment type="similarity">
    <text evidence="9">Belongs to the mitochondrial carrier (TC 2.A.29) family.</text>
</comment>
<evidence type="ECO:0000250" key="1">
    <source>
        <dbReference type="UniProtKB" id="P04575"/>
    </source>
</evidence>
<evidence type="ECO:0000250" key="2">
    <source>
        <dbReference type="UniProtKB" id="P04633"/>
    </source>
</evidence>
<evidence type="ECO:0000250" key="3">
    <source>
        <dbReference type="UniProtKB" id="P12242"/>
    </source>
</evidence>
<evidence type="ECO:0000250" key="4">
    <source>
        <dbReference type="UniProtKB" id="P25874"/>
    </source>
</evidence>
<evidence type="ECO:0000250" key="5">
    <source>
        <dbReference type="UniProtKB" id="W5PSH7"/>
    </source>
</evidence>
<evidence type="ECO:0000255" key="6"/>
<evidence type="ECO:0000269" key="7">
    <source>
    </source>
</evidence>
<evidence type="ECO:0000303" key="8">
    <source>
    </source>
</evidence>
<evidence type="ECO:0000305" key="9"/>
<feature type="chain" id="PRO_0000253021" description="Mitochondrial brown fat uncoupling protein 1">
    <location>
        <begin position="1"/>
        <end position="308"/>
    </location>
</feature>
<feature type="topological domain" description="Mitochondrial intermembrane" evidence="2">
    <location>
        <begin position="1"/>
        <end position="10"/>
    </location>
</feature>
<feature type="transmembrane region" description="Helical; Name=1" evidence="6">
    <location>
        <begin position="11"/>
        <end position="33"/>
    </location>
</feature>
<feature type="topological domain" description="Mitochondrial matrix" evidence="2">
    <location>
        <begin position="34"/>
        <end position="74"/>
    </location>
</feature>
<feature type="transmembrane region" description="Helical; Name=2" evidence="6">
    <location>
        <begin position="75"/>
        <end position="97"/>
    </location>
</feature>
<feature type="topological domain" description="Mitochondrial intermembrane" evidence="2">
    <location>
        <begin position="98"/>
        <end position="117"/>
    </location>
</feature>
<feature type="transmembrane region" description="Helical; Name=3" evidence="6">
    <location>
        <begin position="118"/>
        <end position="134"/>
    </location>
</feature>
<feature type="topological domain" description="Mitochondrial matrix" evidence="2">
    <location>
        <begin position="135"/>
        <end position="179"/>
    </location>
</feature>
<feature type="transmembrane region" description="Helical; Name=4" evidence="6">
    <location>
        <begin position="180"/>
        <end position="196"/>
    </location>
</feature>
<feature type="topological domain" description="Mitochondrial intermembrane" evidence="2">
    <location>
        <begin position="197"/>
        <end position="213"/>
    </location>
</feature>
<feature type="transmembrane region" description="Helical; Name=5" evidence="6">
    <location>
        <begin position="214"/>
        <end position="233"/>
    </location>
</feature>
<feature type="topological domain" description="Mitochondrial matrix" evidence="2">
    <location>
        <begin position="234"/>
        <end position="267"/>
    </location>
</feature>
<feature type="transmembrane region" description="Helical; Name=6" evidence="6">
    <location>
        <begin position="268"/>
        <end position="290"/>
    </location>
</feature>
<feature type="topological domain" description="Mitochondrial intermembrane" evidence="2">
    <location>
        <begin position="291"/>
        <end position="308"/>
    </location>
</feature>
<feature type="repeat" description="Solcar 1">
    <location>
        <begin position="11"/>
        <end position="103"/>
    </location>
</feature>
<feature type="repeat" description="Solcar 2">
    <location>
        <begin position="112"/>
        <end position="202"/>
    </location>
</feature>
<feature type="repeat" description="Solcar 3">
    <location>
        <begin position="211"/>
        <end position="296"/>
    </location>
</feature>
<feature type="binding site" evidence="4">
    <location>
        <position position="57"/>
    </location>
    <ligand>
        <name>fatty acid 16:0</name>
        <dbReference type="ChEBI" id="CHEBI:78123"/>
    </ligand>
</feature>
<feature type="binding site" evidence="4">
    <location>
        <position position="270"/>
    </location>
    <ligand>
        <name>fatty acid 16:0</name>
        <dbReference type="ChEBI" id="CHEBI:78123"/>
    </ligand>
</feature>
<feature type="modified residue" description="Cysteine sulfenic acid (-SOH)" evidence="3">
    <location>
        <position position="255"/>
    </location>
</feature>
<name>UCP1_SUNMU</name>
<organism>
    <name type="scientific">Suncus murinus</name>
    <name type="common">Asian house shrew</name>
    <name type="synonym">Musk shrew</name>
    <dbReference type="NCBI Taxonomy" id="9378"/>
    <lineage>
        <taxon>Eukaryota</taxon>
        <taxon>Metazoa</taxon>
        <taxon>Chordata</taxon>
        <taxon>Craniata</taxon>
        <taxon>Vertebrata</taxon>
        <taxon>Euteleostomi</taxon>
        <taxon>Mammalia</taxon>
        <taxon>Eutheria</taxon>
        <taxon>Laurasiatheria</taxon>
        <taxon>Eulipotyphla</taxon>
        <taxon>Soricidae</taxon>
        <taxon>Crocidurinae</taxon>
        <taxon>Suncus</taxon>
    </lineage>
</organism>
<keyword id="KW-0407">Ion channel</keyword>
<keyword id="KW-0406">Ion transport</keyword>
<keyword id="KW-0472">Membrane</keyword>
<keyword id="KW-0496">Mitochondrion</keyword>
<keyword id="KW-0999">Mitochondrion inner membrane</keyword>
<keyword id="KW-0558">Oxidation</keyword>
<keyword id="KW-0677">Repeat</keyword>
<keyword id="KW-0812">Transmembrane</keyword>
<keyword id="KW-1133">Transmembrane helix</keyword>
<keyword id="KW-0813">Transport</keyword>